<feature type="signal peptide" evidence="1">
    <location>
        <begin position="1"/>
        <end position="27"/>
    </location>
</feature>
<feature type="chain" id="PRO_0000031599" description="Staphylokinase">
    <location>
        <begin position="28"/>
        <end position="163"/>
    </location>
</feature>
<reference key="1">
    <citation type="journal article" date="2001" name="Lancet">
        <title>Whole genome sequencing of meticillin-resistant Staphylococcus aureus.</title>
        <authorList>
            <person name="Kuroda M."/>
            <person name="Ohta T."/>
            <person name="Uchiyama I."/>
            <person name="Baba T."/>
            <person name="Yuzawa H."/>
            <person name="Kobayashi I."/>
            <person name="Cui L."/>
            <person name="Oguchi A."/>
            <person name="Aoki K."/>
            <person name="Nagai Y."/>
            <person name="Lian J.-Q."/>
            <person name="Ito T."/>
            <person name="Kanamori M."/>
            <person name="Matsumaru H."/>
            <person name="Maruyama A."/>
            <person name="Murakami H."/>
            <person name="Hosoyama A."/>
            <person name="Mizutani-Ui Y."/>
            <person name="Takahashi N.K."/>
            <person name="Sawano T."/>
            <person name="Inoue R."/>
            <person name="Kaito C."/>
            <person name="Sekimizu K."/>
            <person name="Hirakawa H."/>
            <person name="Kuhara S."/>
            <person name="Goto S."/>
            <person name="Yabuzaki J."/>
            <person name="Kanehisa M."/>
            <person name="Yamashita A."/>
            <person name="Oshima K."/>
            <person name="Furuya K."/>
            <person name="Yoshino C."/>
            <person name="Shiba T."/>
            <person name="Hattori M."/>
            <person name="Ogasawara N."/>
            <person name="Hayashi H."/>
            <person name="Hiramatsu K."/>
        </authorList>
    </citation>
    <scope>NUCLEOTIDE SEQUENCE [LARGE SCALE GENOMIC DNA]</scope>
    <source>
        <strain>Mu50 / ATCC 700699</strain>
    </source>
</reference>
<sequence>MLKRSLLFLTVLLLLFSFSSITNEVSASSSFDKGKYKKGDDASYFEPTGPYLMVNVTGVDGKGNELLSPHYVEFPIKPGTTLTKEKIEYYVEWALDATAYKEFRVVELDPSAKIEVTYYDKNKKKEETKSFPITEKGFVVPDLSEHIKNPGFNLITKVVIEKK</sequence>
<name>SAK_STAAM</name>
<organism>
    <name type="scientific">Staphylococcus aureus (strain Mu50 / ATCC 700699)</name>
    <dbReference type="NCBI Taxonomy" id="158878"/>
    <lineage>
        <taxon>Bacteria</taxon>
        <taxon>Bacillati</taxon>
        <taxon>Bacillota</taxon>
        <taxon>Bacilli</taxon>
        <taxon>Bacillales</taxon>
        <taxon>Staphylococcaceae</taxon>
        <taxon>Staphylococcus</taxon>
    </lineage>
</organism>
<gene>
    <name type="primary">sak</name>
    <name type="ordered locus">SAV1944</name>
</gene>
<comment type="function">
    <text evidence="1">Potent plasminogen activator that converts plasminogen into plasmin. It forms a 1:1 complex with plasmin, which in turn activates other plasminogen molecules (By similarity).</text>
</comment>
<comment type="subcellular location">
    <subcellularLocation>
        <location evidence="1">Secreted</location>
    </subcellularLocation>
</comment>
<comment type="similarity">
    <text evidence="2">Belongs to the staphylokinase family.</text>
</comment>
<protein>
    <recommendedName>
        <fullName>Staphylokinase</fullName>
    </recommendedName>
</protein>
<dbReference type="EMBL" id="BA000017">
    <property type="protein sequence ID" value="BAB58106.1"/>
    <property type="molecule type" value="Genomic_DNA"/>
</dbReference>
<dbReference type="RefSeq" id="WP_000920038.1">
    <property type="nucleotide sequence ID" value="NC_002758.2"/>
</dbReference>
<dbReference type="BMRB" id="P68801"/>
<dbReference type="SMR" id="P68801"/>
<dbReference type="KEGG" id="sav:SAV1944"/>
<dbReference type="HOGENOM" id="CLU_137975_0_0_9"/>
<dbReference type="PRO" id="PR:P68801"/>
<dbReference type="Proteomes" id="UP000002481">
    <property type="component" value="Chromosome"/>
</dbReference>
<dbReference type="GO" id="GO:0005576">
    <property type="term" value="C:extracellular region"/>
    <property type="evidence" value="ECO:0007669"/>
    <property type="project" value="UniProtKB-SubCell"/>
</dbReference>
<dbReference type="Gene3D" id="3.10.20.130">
    <property type="match status" value="1"/>
</dbReference>
<dbReference type="InterPro" id="IPR004093">
    <property type="entry name" value="SAK"/>
</dbReference>
<dbReference type="InterPro" id="IPR036120">
    <property type="entry name" value="SAK/SK_sf"/>
</dbReference>
<dbReference type="Pfam" id="PF02821">
    <property type="entry name" value="Staphylokinase"/>
    <property type="match status" value="1"/>
</dbReference>
<dbReference type="SUPFAM" id="SSF54328">
    <property type="entry name" value="Staphylokinase/streptokinase"/>
    <property type="match status" value="1"/>
</dbReference>
<keyword id="KW-0617">Plasminogen activation</keyword>
<keyword id="KW-0964">Secreted</keyword>
<keyword id="KW-0732">Signal</keyword>
<evidence type="ECO:0000250" key="1"/>
<evidence type="ECO:0000305" key="2"/>
<proteinExistence type="inferred from homology"/>
<accession>P68801</accession>
<accession>P00802</accession>